<proteinExistence type="evidence at protein level"/>
<reference key="1">
    <citation type="journal article" date="2004" name="Nat. Genet.">
        <title>Complete sequencing and characterization of 21,243 full-length human cDNAs.</title>
        <authorList>
            <person name="Ota T."/>
            <person name="Suzuki Y."/>
            <person name="Nishikawa T."/>
            <person name="Otsuki T."/>
            <person name="Sugiyama T."/>
            <person name="Irie R."/>
            <person name="Wakamatsu A."/>
            <person name="Hayashi K."/>
            <person name="Sato H."/>
            <person name="Nagai K."/>
            <person name="Kimura K."/>
            <person name="Makita H."/>
            <person name="Sekine M."/>
            <person name="Obayashi M."/>
            <person name="Nishi T."/>
            <person name="Shibahara T."/>
            <person name="Tanaka T."/>
            <person name="Ishii S."/>
            <person name="Yamamoto J."/>
            <person name="Saito K."/>
            <person name="Kawai Y."/>
            <person name="Isono Y."/>
            <person name="Nakamura Y."/>
            <person name="Nagahari K."/>
            <person name="Murakami K."/>
            <person name="Yasuda T."/>
            <person name="Iwayanagi T."/>
            <person name="Wagatsuma M."/>
            <person name="Shiratori A."/>
            <person name="Sudo H."/>
            <person name="Hosoiri T."/>
            <person name="Kaku Y."/>
            <person name="Kodaira H."/>
            <person name="Kondo H."/>
            <person name="Sugawara M."/>
            <person name="Takahashi M."/>
            <person name="Kanda K."/>
            <person name="Yokoi T."/>
            <person name="Furuya T."/>
            <person name="Kikkawa E."/>
            <person name="Omura Y."/>
            <person name="Abe K."/>
            <person name="Kamihara K."/>
            <person name="Katsuta N."/>
            <person name="Sato K."/>
            <person name="Tanikawa M."/>
            <person name="Yamazaki M."/>
            <person name="Ninomiya K."/>
            <person name="Ishibashi T."/>
            <person name="Yamashita H."/>
            <person name="Murakawa K."/>
            <person name="Fujimori K."/>
            <person name="Tanai H."/>
            <person name="Kimata M."/>
            <person name="Watanabe M."/>
            <person name="Hiraoka S."/>
            <person name="Chiba Y."/>
            <person name="Ishida S."/>
            <person name="Ono Y."/>
            <person name="Takiguchi S."/>
            <person name="Watanabe S."/>
            <person name="Yosida M."/>
            <person name="Hotuta T."/>
            <person name="Kusano J."/>
            <person name="Kanehori K."/>
            <person name="Takahashi-Fujii A."/>
            <person name="Hara H."/>
            <person name="Tanase T.-O."/>
            <person name="Nomura Y."/>
            <person name="Togiya S."/>
            <person name="Komai F."/>
            <person name="Hara R."/>
            <person name="Takeuchi K."/>
            <person name="Arita M."/>
            <person name="Imose N."/>
            <person name="Musashino K."/>
            <person name="Yuuki H."/>
            <person name="Oshima A."/>
            <person name="Sasaki N."/>
            <person name="Aotsuka S."/>
            <person name="Yoshikawa Y."/>
            <person name="Matsunawa H."/>
            <person name="Ichihara T."/>
            <person name="Shiohata N."/>
            <person name="Sano S."/>
            <person name="Moriya S."/>
            <person name="Momiyama H."/>
            <person name="Satoh N."/>
            <person name="Takami S."/>
            <person name="Terashima Y."/>
            <person name="Suzuki O."/>
            <person name="Nakagawa S."/>
            <person name="Senoh A."/>
            <person name="Mizoguchi H."/>
            <person name="Goto Y."/>
            <person name="Shimizu F."/>
            <person name="Wakebe H."/>
            <person name="Hishigaki H."/>
            <person name="Watanabe T."/>
            <person name="Sugiyama A."/>
            <person name="Takemoto M."/>
            <person name="Kawakami B."/>
            <person name="Yamazaki M."/>
            <person name="Watanabe K."/>
            <person name="Kumagai A."/>
            <person name="Itakura S."/>
            <person name="Fukuzumi Y."/>
            <person name="Fujimori Y."/>
            <person name="Komiyama M."/>
            <person name="Tashiro H."/>
            <person name="Tanigami A."/>
            <person name="Fujiwara T."/>
            <person name="Ono T."/>
            <person name="Yamada K."/>
            <person name="Fujii Y."/>
            <person name="Ozaki K."/>
            <person name="Hirao M."/>
            <person name="Ohmori Y."/>
            <person name="Kawabata A."/>
            <person name="Hikiji T."/>
            <person name="Kobatake N."/>
            <person name="Inagaki H."/>
            <person name="Ikema Y."/>
            <person name="Okamoto S."/>
            <person name="Okitani R."/>
            <person name="Kawakami T."/>
            <person name="Noguchi S."/>
            <person name="Itoh T."/>
            <person name="Shigeta K."/>
            <person name="Senba T."/>
            <person name="Matsumura K."/>
            <person name="Nakajima Y."/>
            <person name="Mizuno T."/>
            <person name="Morinaga M."/>
            <person name="Sasaki M."/>
            <person name="Togashi T."/>
            <person name="Oyama M."/>
            <person name="Hata H."/>
            <person name="Watanabe M."/>
            <person name="Komatsu T."/>
            <person name="Mizushima-Sugano J."/>
            <person name="Satoh T."/>
            <person name="Shirai Y."/>
            <person name="Takahashi Y."/>
            <person name="Nakagawa K."/>
            <person name="Okumura K."/>
            <person name="Nagase T."/>
            <person name="Nomura N."/>
            <person name="Kikuchi H."/>
            <person name="Masuho Y."/>
            <person name="Yamashita R."/>
            <person name="Nakai K."/>
            <person name="Yada T."/>
            <person name="Nakamura Y."/>
            <person name="Ohara O."/>
            <person name="Isogai T."/>
            <person name="Sugano S."/>
        </authorList>
    </citation>
    <scope>NUCLEOTIDE SEQUENCE [LARGE SCALE MRNA] (ISOFORM 2)</scope>
    <source>
        <tissue>Thymus</tissue>
    </source>
</reference>
<reference key="2">
    <citation type="journal article" date="2004" name="Genome Res.">
        <title>The status, quality, and expansion of the NIH full-length cDNA project: the Mammalian Gene Collection (MGC).</title>
        <authorList>
            <consortium name="The MGC Project Team"/>
        </authorList>
    </citation>
    <scope>NUCLEOTIDE SEQUENCE [LARGE SCALE MRNA] OF 36-290 (ISOFORM 1)</scope>
    <source>
        <tissue>Placenta</tissue>
    </source>
</reference>
<reference key="3">
    <citation type="journal article" date="2013" name="J. Proteome Res.">
        <title>Toward a comprehensive characterization of a human cancer cell phosphoproteome.</title>
        <authorList>
            <person name="Zhou H."/>
            <person name="Di Palma S."/>
            <person name="Preisinger C."/>
            <person name="Peng M."/>
            <person name="Polat A.N."/>
            <person name="Heck A.J."/>
            <person name="Mohammed S."/>
        </authorList>
    </citation>
    <scope>PHOSPHORYLATION [LARGE SCALE ANALYSIS] AT SER-34</scope>
    <scope>IDENTIFICATION BY MASS SPECTROMETRY [LARGE SCALE ANALYSIS]</scope>
    <source>
        <tissue>Cervix carcinoma</tissue>
    </source>
</reference>
<reference key="4">
    <citation type="journal article" date="2022" name="Cell Res.">
        <title>Regulators of tubulin polyglutamylation control nuclear shape and cilium disassembly by balancing microtubule and actin assembly.</title>
        <authorList>
            <person name="Wang L."/>
            <person name="Paudyal S.C."/>
            <person name="Kang Y."/>
            <person name="Owa M."/>
            <person name="Liang F.X."/>
            <person name="Spektor A."/>
            <person name="Knaut H."/>
            <person name="Sanchez I."/>
            <person name="Dynlacht B.D."/>
        </authorList>
    </citation>
    <scope>INTERACTION WITH PCM1; CSTPP1 AND LRRC49</scope>
    <scope>SUBCELLULAR LOCATION</scope>
</reference>
<sequence length="290" mass="31275">MAAVEKRRQAVPPPAGFTDSGRQSVSRAAGAAESEEDFLRQVGVTEMLRAALLKVLEARPEEPIAFLAHYFENMGLRSPVNGGAGEPPGQLLLQQQRLGRALWHLRLAHHSQRAAFNNNVSVAYECLSAGGRRKRPGLDGRTYSELLRRICRDGQAPEEVVAPLLRKVQCRDHEAVPLSVFRAGTLTCFVLLEFVARAGALFQLLEDSAAAVADRRVGQAVLDTLEGALQASDAAAPARFLEAGSRLGPDSLALALDRAVGGRRPSAPMTREEFLERAAALFIAKVKPVG</sequence>
<feature type="chain" id="PRO_0000249316" description="Tubulin polyglutamylase complex subunit 1">
    <location>
        <begin position="1"/>
        <end position="290"/>
    </location>
</feature>
<feature type="region of interest" description="Disordered" evidence="2">
    <location>
        <begin position="1"/>
        <end position="30"/>
    </location>
</feature>
<feature type="modified residue" description="Phosphoserine" evidence="8">
    <location>
        <position position="34"/>
    </location>
</feature>
<feature type="modified residue" description="Phosphoserine" evidence="1">
    <location>
        <position position="266"/>
    </location>
</feature>
<feature type="splice variant" id="VSP_020401" description="In isoform 2." evidence="4">
    <location>
        <begin position="248"/>
        <end position="266"/>
    </location>
</feature>
<comment type="function">
    <text evidence="1 6">Subunit of the tubulin polyglutamylase complex (TPGC). The complex mediates cilia and flagella polyglutamylation which is essential for their biogenesis and motility (Probable). May act in the targeting of the tubulin polyglutamylase complex. Required for the development of the spermatid flagellum (By similarity).</text>
</comment>
<comment type="subunit">
    <text evidence="3 6">Part of the neuronal tubulin polyglutamylase complex which contains TPGS1, TPGS2, TTLL1, LRRC49 and NICN1 (Probable). Interacts with PCM1, CSTPP1 and LRRC49 (PubMed:34782749).</text>
</comment>
<comment type="subcellular location">
    <subcellularLocation>
        <location evidence="1">Cytoplasm</location>
        <location evidence="1">Cytoskeleton</location>
        <location evidence="1">Cilium axoneme</location>
    </subcellularLocation>
    <subcellularLocation>
        <location evidence="1">Cytoplasm</location>
        <location evidence="1">Cytoskeleton</location>
        <location evidence="1">Flagellum axoneme</location>
    </subcellularLocation>
    <subcellularLocation>
        <location evidence="1">Cytoplasm</location>
        <location evidence="1">Cytoskeleton</location>
        <location evidence="1">Cilium basal body</location>
    </subcellularLocation>
    <subcellularLocation>
        <location evidence="1">Cytoplasm</location>
        <location evidence="1">Cytoskeleton</location>
        <location evidence="1">Flagellum basal body</location>
    </subcellularLocation>
    <subcellularLocation>
        <location evidence="1">Cell projection</location>
        <location evidence="1">Axon</location>
    </subcellularLocation>
    <subcellularLocation>
        <location evidence="1">Cell projection</location>
        <location evidence="1">Dendrite</location>
    </subcellularLocation>
    <subcellularLocation>
        <location evidence="1">Cytoplasm</location>
        <location evidence="1">Cytoskeleton</location>
        <location evidence="1">Microtubule organizing center</location>
        <location evidence="1">Centrosome</location>
    </subcellularLocation>
    <subcellularLocation>
        <location evidence="3">Cytoplasm</location>
        <location evidence="3">Cytoskeleton</location>
        <location evidence="3">Microtubule organizing center</location>
        <location evidence="3">Centrosome</location>
        <location evidence="3">Centriolar satellite</location>
    </subcellularLocation>
    <text evidence="1">Associated with microtubules from neurites, centrosomes, basal bodies and axonemes.</text>
</comment>
<comment type="alternative products">
    <event type="alternative splicing"/>
    <isoform>
        <id>Q6ZTW0-1</id>
        <name>1</name>
        <sequence type="displayed"/>
    </isoform>
    <isoform>
        <id>Q6ZTW0-2</id>
        <name>2</name>
        <sequence type="described" ref="VSP_020401"/>
    </isoform>
</comment>
<protein>
    <recommendedName>
        <fullName evidence="5">Tubulin polyglutamylase complex subunit 1</fullName>
        <shortName>PGs1</shortName>
    </recommendedName>
</protein>
<evidence type="ECO:0000250" key="1">
    <source>
        <dbReference type="UniProtKB" id="Q99MS8"/>
    </source>
</evidence>
<evidence type="ECO:0000256" key="2">
    <source>
        <dbReference type="SAM" id="MobiDB-lite"/>
    </source>
</evidence>
<evidence type="ECO:0000269" key="3">
    <source>
    </source>
</evidence>
<evidence type="ECO:0000303" key="4">
    <source>
    </source>
</evidence>
<evidence type="ECO:0000305" key="5"/>
<evidence type="ECO:0000305" key="6">
    <source>
    </source>
</evidence>
<evidence type="ECO:0000312" key="7">
    <source>
        <dbReference type="HGNC" id="HGNC:25058"/>
    </source>
</evidence>
<evidence type="ECO:0007744" key="8">
    <source>
    </source>
</evidence>
<keyword id="KW-0025">Alternative splicing</keyword>
<keyword id="KW-0966">Cell projection</keyword>
<keyword id="KW-0969">Cilium</keyword>
<keyword id="KW-0963">Cytoplasm</keyword>
<keyword id="KW-0206">Cytoskeleton</keyword>
<keyword id="KW-0217">Developmental protein</keyword>
<keyword id="KW-0221">Differentiation</keyword>
<keyword id="KW-0282">Flagellum</keyword>
<keyword id="KW-0493">Microtubule</keyword>
<keyword id="KW-0597">Phosphoprotein</keyword>
<keyword id="KW-1267">Proteomics identification</keyword>
<keyword id="KW-1185">Reference proteome</keyword>
<keyword id="KW-0744">Spermatogenesis</keyword>
<dbReference type="EMBL" id="AK126170">
    <property type="protein sequence ID" value="BAC86469.1"/>
    <property type="molecule type" value="mRNA"/>
</dbReference>
<dbReference type="EMBL" id="BC009520">
    <property type="protein sequence ID" value="AAH09520.1"/>
    <property type="molecule type" value="mRNA"/>
</dbReference>
<dbReference type="CCDS" id="CCDS42454.1">
    <molecule id="Q6ZTW0-1"/>
</dbReference>
<dbReference type="RefSeq" id="NP_277048.2">
    <molecule id="Q6ZTW0-1"/>
    <property type="nucleotide sequence ID" value="NM_033513.3"/>
</dbReference>
<dbReference type="BioGRID" id="124900">
    <property type="interactions" value="80"/>
</dbReference>
<dbReference type="ComplexPortal" id="CPX-2572">
    <property type="entry name" value="Tubulin polyglutamylase complex"/>
</dbReference>
<dbReference type="FunCoup" id="Q6ZTW0">
    <property type="interactions" value="616"/>
</dbReference>
<dbReference type="IntAct" id="Q6ZTW0">
    <property type="interactions" value="44"/>
</dbReference>
<dbReference type="STRING" id="9606.ENSP00000352265"/>
<dbReference type="GlyGen" id="Q6ZTW0">
    <property type="glycosylation" value="1 site, 1 O-linked glycan (1 site)"/>
</dbReference>
<dbReference type="iPTMnet" id="Q6ZTW0"/>
<dbReference type="PhosphoSitePlus" id="Q6ZTW0"/>
<dbReference type="BioMuta" id="TPGS1"/>
<dbReference type="DMDM" id="114152292"/>
<dbReference type="jPOST" id="Q6ZTW0"/>
<dbReference type="MassIVE" id="Q6ZTW0"/>
<dbReference type="PaxDb" id="9606-ENSP00000352265"/>
<dbReference type="PeptideAtlas" id="Q6ZTW0"/>
<dbReference type="ProteomicsDB" id="68296">
    <molecule id="Q6ZTW0-1"/>
</dbReference>
<dbReference type="ProteomicsDB" id="68297">
    <molecule id="Q6ZTW0-2"/>
</dbReference>
<dbReference type="Pumba" id="Q6ZTW0"/>
<dbReference type="Antibodypedia" id="53504">
    <property type="antibodies" value="16 antibodies from 9 providers"/>
</dbReference>
<dbReference type="DNASU" id="91978"/>
<dbReference type="Ensembl" id="ENST00000359315.6">
    <molecule id="Q6ZTW0-1"/>
    <property type="protein sequence ID" value="ENSP00000352265.4"/>
    <property type="gene ID" value="ENSG00000141933.9"/>
</dbReference>
<dbReference type="GeneID" id="91978"/>
<dbReference type="KEGG" id="hsa:91978"/>
<dbReference type="MANE-Select" id="ENST00000359315.6">
    <property type="protein sequence ID" value="ENSP00000352265.4"/>
    <property type="RefSeq nucleotide sequence ID" value="NM_033513.3"/>
    <property type="RefSeq protein sequence ID" value="NP_277048.2"/>
</dbReference>
<dbReference type="UCSC" id="uc002lou.4">
    <molecule id="Q6ZTW0-1"/>
    <property type="organism name" value="human"/>
</dbReference>
<dbReference type="AGR" id="HGNC:25058"/>
<dbReference type="CTD" id="91978"/>
<dbReference type="DisGeNET" id="91978"/>
<dbReference type="GeneCards" id="TPGS1"/>
<dbReference type="HGNC" id="HGNC:25058">
    <property type="gene designation" value="TPGS1"/>
</dbReference>
<dbReference type="HPA" id="ENSG00000141933">
    <property type="expression patterns" value="Low tissue specificity"/>
</dbReference>
<dbReference type="MIM" id="620709">
    <property type="type" value="gene"/>
</dbReference>
<dbReference type="neXtProt" id="NX_Q6ZTW0"/>
<dbReference type="OpenTargets" id="ENSG00000141933"/>
<dbReference type="PharmGKB" id="PA134901246"/>
<dbReference type="VEuPathDB" id="HostDB:ENSG00000141933"/>
<dbReference type="eggNOG" id="ENOG502S17Y">
    <property type="taxonomic scope" value="Eukaryota"/>
</dbReference>
<dbReference type="GeneTree" id="ENSGT00500000045074"/>
<dbReference type="HOGENOM" id="CLU_084094_0_0_1"/>
<dbReference type="InParanoid" id="Q6ZTW0"/>
<dbReference type="OMA" id="FSDYIRQ"/>
<dbReference type="OrthoDB" id="64214at2759"/>
<dbReference type="PAN-GO" id="Q6ZTW0">
    <property type="GO annotations" value="2 GO annotations based on evolutionary models"/>
</dbReference>
<dbReference type="PhylomeDB" id="Q6ZTW0"/>
<dbReference type="TreeFam" id="TF329086"/>
<dbReference type="PathwayCommons" id="Q6ZTW0"/>
<dbReference type="Reactome" id="R-HSA-8955332">
    <property type="pathway name" value="Carboxyterminal post-translational modifications of tubulin"/>
</dbReference>
<dbReference type="SignaLink" id="Q6ZTW0"/>
<dbReference type="BioGRID-ORCS" id="91978">
    <property type="hits" value="23 hits in 1160 CRISPR screens"/>
</dbReference>
<dbReference type="ChiTaRS" id="TPGS1">
    <property type="organism name" value="human"/>
</dbReference>
<dbReference type="GenomeRNAi" id="91978"/>
<dbReference type="Pharos" id="Q6ZTW0">
    <property type="development level" value="Tdark"/>
</dbReference>
<dbReference type="PRO" id="PR:Q6ZTW0"/>
<dbReference type="Proteomes" id="UP000005640">
    <property type="component" value="Chromosome 19"/>
</dbReference>
<dbReference type="RNAct" id="Q6ZTW0">
    <property type="molecule type" value="protein"/>
</dbReference>
<dbReference type="Bgee" id="ENSG00000141933">
    <property type="expression patterns" value="Expressed in monocyte and 97 other cell types or tissues"/>
</dbReference>
<dbReference type="GO" id="GO:0030424">
    <property type="term" value="C:axon"/>
    <property type="evidence" value="ECO:0007669"/>
    <property type="project" value="UniProtKB-SubCell"/>
</dbReference>
<dbReference type="GO" id="GO:0034451">
    <property type="term" value="C:centriolar satellite"/>
    <property type="evidence" value="ECO:0007669"/>
    <property type="project" value="UniProtKB-SubCell"/>
</dbReference>
<dbReference type="GO" id="GO:0005813">
    <property type="term" value="C:centrosome"/>
    <property type="evidence" value="ECO:0000314"/>
    <property type="project" value="UniProtKB"/>
</dbReference>
<dbReference type="GO" id="GO:0005737">
    <property type="term" value="C:cytoplasm"/>
    <property type="evidence" value="ECO:0007669"/>
    <property type="project" value="UniProtKB-KW"/>
</dbReference>
<dbReference type="GO" id="GO:0030425">
    <property type="term" value="C:dendrite"/>
    <property type="evidence" value="ECO:0007669"/>
    <property type="project" value="UniProtKB-SubCell"/>
</dbReference>
<dbReference type="GO" id="GO:0005874">
    <property type="term" value="C:microtubule"/>
    <property type="evidence" value="ECO:0007669"/>
    <property type="project" value="UniProtKB-KW"/>
</dbReference>
<dbReference type="GO" id="GO:0005815">
    <property type="term" value="C:microtubule organizing center"/>
    <property type="evidence" value="ECO:0000318"/>
    <property type="project" value="GO_Central"/>
</dbReference>
<dbReference type="GO" id="GO:0031514">
    <property type="term" value="C:motile cilium"/>
    <property type="evidence" value="ECO:0007669"/>
    <property type="project" value="UniProtKB-KW"/>
</dbReference>
<dbReference type="GO" id="GO:0045202">
    <property type="term" value="C:synapse"/>
    <property type="evidence" value="ECO:0007669"/>
    <property type="project" value="GOC"/>
</dbReference>
<dbReference type="GO" id="GO:0008017">
    <property type="term" value="F:microtubule binding"/>
    <property type="evidence" value="ECO:0000318"/>
    <property type="project" value="GO_Central"/>
</dbReference>
<dbReference type="GO" id="GO:0070740">
    <property type="term" value="F:tubulin-glutamic acid ligase activity"/>
    <property type="evidence" value="ECO:0000318"/>
    <property type="project" value="GO_Central"/>
</dbReference>
<dbReference type="GO" id="GO:0030534">
    <property type="term" value="P:adult behavior"/>
    <property type="evidence" value="ECO:0007669"/>
    <property type="project" value="Ensembl"/>
</dbReference>
<dbReference type="GO" id="GO:0007268">
    <property type="term" value="P:chemical synaptic transmission"/>
    <property type="evidence" value="ECO:0007669"/>
    <property type="project" value="Ensembl"/>
</dbReference>
<dbReference type="GO" id="GO:0007288">
    <property type="term" value="P:sperm axoneme assembly"/>
    <property type="evidence" value="ECO:0000318"/>
    <property type="project" value="GO_Central"/>
</dbReference>
<dbReference type="GO" id="GO:0051648">
    <property type="term" value="P:vesicle localization"/>
    <property type="evidence" value="ECO:0007669"/>
    <property type="project" value="Ensembl"/>
</dbReference>
<dbReference type="CDD" id="cd22960">
    <property type="entry name" value="DD_TPGS1"/>
    <property type="match status" value="1"/>
</dbReference>
<dbReference type="FunFam" id="1.20.890.10:FF:000011">
    <property type="entry name" value="tubulin polyglutamylase complex subunit 1"/>
    <property type="match status" value="1"/>
</dbReference>
<dbReference type="Gene3D" id="1.20.890.10">
    <property type="entry name" value="cAMP-dependent protein kinase regulatory subunit, dimerization-anchoring domain"/>
    <property type="match status" value="1"/>
</dbReference>
<dbReference type="InterPro" id="IPR047502">
    <property type="entry name" value="DD_TPGS1"/>
</dbReference>
<dbReference type="InterPro" id="IPR039235">
    <property type="entry name" value="TPGS1"/>
</dbReference>
<dbReference type="PANTHER" id="PTHR31932">
    <property type="entry name" value="TUBULIN POLYGLUTAMYLASE COMPLEX SUBUNIT 1"/>
    <property type="match status" value="1"/>
</dbReference>
<dbReference type="PANTHER" id="PTHR31932:SF2">
    <property type="entry name" value="TUBULIN POLYGLUTAMYLASE COMPLEX SUBUNIT 1"/>
    <property type="match status" value="1"/>
</dbReference>
<dbReference type="Pfam" id="PF24480">
    <property type="entry name" value="TPGS1_C"/>
    <property type="match status" value="1"/>
</dbReference>
<dbReference type="SUPFAM" id="SSF47391">
    <property type="entry name" value="Dimerization-anchoring domain of cAMP-dependent PK regulatory subunit"/>
    <property type="match status" value="1"/>
</dbReference>
<organism>
    <name type="scientific">Homo sapiens</name>
    <name type="common">Human</name>
    <dbReference type="NCBI Taxonomy" id="9606"/>
    <lineage>
        <taxon>Eukaryota</taxon>
        <taxon>Metazoa</taxon>
        <taxon>Chordata</taxon>
        <taxon>Craniata</taxon>
        <taxon>Vertebrata</taxon>
        <taxon>Euteleostomi</taxon>
        <taxon>Mammalia</taxon>
        <taxon>Eutheria</taxon>
        <taxon>Euarchontoglires</taxon>
        <taxon>Primates</taxon>
        <taxon>Haplorrhini</taxon>
        <taxon>Catarrhini</taxon>
        <taxon>Hominidae</taxon>
        <taxon>Homo</taxon>
    </lineage>
</organism>
<gene>
    <name evidence="7" type="primary">TPGS1</name>
    <name type="synonym">C19orf20</name>
</gene>
<name>TPGS1_HUMAN</name>
<accession>Q6ZTW0</accession>
<accession>Q96GE2</accession>